<organism>
    <name type="scientific">Pasteurella multocida (strain Pm70)</name>
    <dbReference type="NCBI Taxonomy" id="272843"/>
    <lineage>
        <taxon>Bacteria</taxon>
        <taxon>Pseudomonadati</taxon>
        <taxon>Pseudomonadota</taxon>
        <taxon>Gammaproteobacteria</taxon>
        <taxon>Pasteurellales</taxon>
        <taxon>Pasteurellaceae</taxon>
        <taxon>Pasteurella</taxon>
    </lineage>
</organism>
<comment type="function">
    <text evidence="1">Located at the top of the head of the 30S subunit, it contacts several helices of the 16S rRNA. In the 70S ribosome it contacts the 23S rRNA (bridge B1a) and protein L5 of the 50S subunit (bridge B1b), connecting the 2 subunits; these bridges are implicated in subunit movement. Contacts the tRNAs in the A and P-sites.</text>
</comment>
<comment type="subunit">
    <text evidence="1">Part of the 30S ribosomal subunit. Forms a loose heterodimer with protein S19. Forms two bridges to the 50S subunit in the 70S ribosome.</text>
</comment>
<comment type="similarity">
    <text evidence="1">Belongs to the universal ribosomal protein uS13 family.</text>
</comment>
<gene>
    <name evidence="1" type="primary">rpsM</name>
    <name evidence="1" type="synonym">rps13</name>
    <name type="ordered locus">PM1393</name>
</gene>
<evidence type="ECO:0000255" key="1">
    <source>
        <dbReference type="HAMAP-Rule" id="MF_01315"/>
    </source>
</evidence>
<evidence type="ECO:0000256" key="2">
    <source>
        <dbReference type="SAM" id="MobiDB-lite"/>
    </source>
</evidence>
<evidence type="ECO:0000305" key="3"/>
<dbReference type="EMBL" id="AE004439">
    <property type="protein sequence ID" value="AAK03477.1"/>
    <property type="molecule type" value="Genomic_DNA"/>
</dbReference>
<dbReference type="RefSeq" id="WP_005717912.1">
    <property type="nucleotide sequence ID" value="NC_002663.1"/>
</dbReference>
<dbReference type="SMR" id="Q9CL51"/>
<dbReference type="STRING" id="272843.PM1393"/>
<dbReference type="EnsemblBacteria" id="AAK03477">
    <property type="protein sequence ID" value="AAK03477"/>
    <property type="gene ID" value="PM1393"/>
</dbReference>
<dbReference type="GeneID" id="77207048"/>
<dbReference type="KEGG" id="pmu:PM1393"/>
<dbReference type="HOGENOM" id="CLU_103849_1_2_6"/>
<dbReference type="OrthoDB" id="9803610at2"/>
<dbReference type="Proteomes" id="UP000000809">
    <property type="component" value="Chromosome"/>
</dbReference>
<dbReference type="GO" id="GO:0005829">
    <property type="term" value="C:cytosol"/>
    <property type="evidence" value="ECO:0007669"/>
    <property type="project" value="TreeGrafter"/>
</dbReference>
<dbReference type="GO" id="GO:0015935">
    <property type="term" value="C:small ribosomal subunit"/>
    <property type="evidence" value="ECO:0007669"/>
    <property type="project" value="TreeGrafter"/>
</dbReference>
<dbReference type="GO" id="GO:0019843">
    <property type="term" value="F:rRNA binding"/>
    <property type="evidence" value="ECO:0007669"/>
    <property type="project" value="UniProtKB-UniRule"/>
</dbReference>
<dbReference type="GO" id="GO:0003735">
    <property type="term" value="F:structural constituent of ribosome"/>
    <property type="evidence" value="ECO:0007669"/>
    <property type="project" value="InterPro"/>
</dbReference>
<dbReference type="GO" id="GO:0000049">
    <property type="term" value="F:tRNA binding"/>
    <property type="evidence" value="ECO:0007669"/>
    <property type="project" value="UniProtKB-UniRule"/>
</dbReference>
<dbReference type="GO" id="GO:0006412">
    <property type="term" value="P:translation"/>
    <property type="evidence" value="ECO:0007669"/>
    <property type="project" value="UniProtKB-UniRule"/>
</dbReference>
<dbReference type="FunFam" id="1.10.8.50:FF:000001">
    <property type="entry name" value="30S ribosomal protein S13"/>
    <property type="match status" value="1"/>
</dbReference>
<dbReference type="FunFam" id="4.10.910.10:FF:000001">
    <property type="entry name" value="30S ribosomal protein S13"/>
    <property type="match status" value="1"/>
</dbReference>
<dbReference type="Gene3D" id="1.10.8.50">
    <property type="match status" value="1"/>
</dbReference>
<dbReference type="Gene3D" id="4.10.910.10">
    <property type="entry name" value="30s ribosomal protein s13, domain 2"/>
    <property type="match status" value="1"/>
</dbReference>
<dbReference type="HAMAP" id="MF_01315">
    <property type="entry name" value="Ribosomal_uS13"/>
    <property type="match status" value="1"/>
</dbReference>
<dbReference type="InterPro" id="IPR027437">
    <property type="entry name" value="Rbsml_uS13_C"/>
</dbReference>
<dbReference type="InterPro" id="IPR001892">
    <property type="entry name" value="Ribosomal_uS13"/>
</dbReference>
<dbReference type="InterPro" id="IPR010979">
    <property type="entry name" value="Ribosomal_uS13-like_H2TH"/>
</dbReference>
<dbReference type="InterPro" id="IPR019980">
    <property type="entry name" value="Ribosomal_uS13_bac-type"/>
</dbReference>
<dbReference type="InterPro" id="IPR018269">
    <property type="entry name" value="Ribosomal_uS13_CS"/>
</dbReference>
<dbReference type="NCBIfam" id="TIGR03631">
    <property type="entry name" value="uS13_bact"/>
    <property type="match status" value="1"/>
</dbReference>
<dbReference type="PANTHER" id="PTHR10871">
    <property type="entry name" value="30S RIBOSOMAL PROTEIN S13/40S RIBOSOMAL PROTEIN S18"/>
    <property type="match status" value="1"/>
</dbReference>
<dbReference type="PANTHER" id="PTHR10871:SF1">
    <property type="entry name" value="SMALL RIBOSOMAL SUBUNIT PROTEIN US13M"/>
    <property type="match status" value="1"/>
</dbReference>
<dbReference type="Pfam" id="PF00416">
    <property type="entry name" value="Ribosomal_S13"/>
    <property type="match status" value="1"/>
</dbReference>
<dbReference type="PIRSF" id="PIRSF002134">
    <property type="entry name" value="Ribosomal_S13"/>
    <property type="match status" value="1"/>
</dbReference>
<dbReference type="SUPFAM" id="SSF46946">
    <property type="entry name" value="S13-like H2TH domain"/>
    <property type="match status" value="1"/>
</dbReference>
<dbReference type="PROSITE" id="PS00646">
    <property type="entry name" value="RIBOSOMAL_S13_1"/>
    <property type="match status" value="1"/>
</dbReference>
<dbReference type="PROSITE" id="PS50159">
    <property type="entry name" value="RIBOSOMAL_S13_2"/>
    <property type="match status" value="1"/>
</dbReference>
<keyword id="KW-1185">Reference proteome</keyword>
<keyword id="KW-0687">Ribonucleoprotein</keyword>
<keyword id="KW-0689">Ribosomal protein</keyword>
<keyword id="KW-0694">RNA-binding</keyword>
<keyword id="KW-0699">rRNA-binding</keyword>
<keyword id="KW-0820">tRNA-binding</keyword>
<name>RS13_PASMU</name>
<accession>Q9CL51</accession>
<proteinExistence type="inferred from homology"/>
<protein>
    <recommendedName>
        <fullName evidence="1">Small ribosomal subunit protein uS13</fullName>
    </recommendedName>
    <alternativeName>
        <fullName evidence="3">30S ribosomal protein S13</fullName>
    </alternativeName>
</protein>
<feature type="chain" id="PRO_0000132120" description="Small ribosomal subunit protein uS13">
    <location>
        <begin position="1"/>
        <end position="118"/>
    </location>
</feature>
<feature type="region of interest" description="Disordered" evidence="2">
    <location>
        <begin position="94"/>
        <end position="118"/>
    </location>
</feature>
<sequence length="118" mass="13209">MARIAGINIPDHKHTVIALTAIYGIGKTRAQAICAATGIAEDVKISELSEEQIDKLRDEVGKFTVEGDLRREVTLNIKRLLDLGCYRGLRHRRGLPVRGQRTKTNARTRKGPRKPIKK</sequence>
<reference key="1">
    <citation type="journal article" date="2001" name="Proc. Natl. Acad. Sci. U.S.A.">
        <title>Complete genomic sequence of Pasteurella multocida Pm70.</title>
        <authorList>
            <person name="May B.J."/>
            <person name="Zhang Q."/>
            <person name="Li L.L."/>
            <person name="Paustian M.L."/>
            <person name="Whittam T.S."/>
            <person name="Kapur V."/>
        </authorList>
    </citation>
    <scope>NUCLEOTIDE SEQUENCE [LARGE SCALE GENOMIC DNA]</scope>
    <source>
        <strain>Pm70</strain>
    </source>
</reference>